<evidence type="ECO:0000255" key="1">
    <source>
        <dbReference type="HAMAP-Rule" id="MF_00532"/>
    </source>
</evidence>
<evidence type="ECO:0000305" key="2"/>
<proteinExistence type="inferred from homology"/>
<accession>B8H554</accession>
<sequence length="157" mass="17187">MTDAQGFDALASLSSNPEAAAPAEPKIDAQGRAYATGKRKNAIARVWIKPGKGSITINGRDQEVYFARPVLRMMIAQPLEVTDRLGQFDVVVTVEGSGLSGQAGAIRHGLSKALTYYEPGLRPVLKPHGFLTRDSRVVERKKYGKAKARRSFQFSKR</sequence>
<feature type="chain" id="PRO_1000146442" description="Small ribosomal subunit protein uS9">
    <location>
        <begin position="1"/>
        <end position="157"/>
    </location>
</feature>
<gene>
    <name evidence="1" type="primary">rpsI</name>
    <name type="ordered locus">CCNA_01441</name>
</gene>
<name>RS9_CAUVN</name>
<keyword id="KW-1185">Reference proteome</keyword>
<keyword id="KW-0687">Ribonucleoprotein</keyword>
<keyword id="KW-0689">Ribosomal protein</keyword>
<reference key="1">
    <citation type="journal article" date="2010" name="J. Bacteriol.">
        <title>The genetic basis of laboratory adaptation in Caulobacter crescentus.</title>
        <authorList>
            <person name="Marks M.E."/>
            <person name="Castro-Rojas C.M."/>
            <person name="Teiling C."/>
            <person name="Du L."/>
            <person name="Kapatral V."/>
            <person name="Walunas T.L."/>
            <person name="Crosson S."/>
        </authorList>
    </citation>
    <scope>NUCLEOTIDE SEQUENCE [LARGE SCALE GENOMIC DNA]</scope>
    <source>
        <strain>NA1000 / CB15N</strain>
    </source>
</reference>
<comment type="similarity">
    <text evidence="1">Belongs to the universal ribosomal protein uS9 family.</text>
</comment>
<protein>
    <recommendedName>
        <fullName evidence="1">Small ribosomal subunit protein uS9</fullName>
    </recommendedName>
    <alternativeName>
        <fullName evidence="2">30S ribosomal protein S9</fullName>
    </alternativeName>
</protein>
<dbReference type="EMBL" id="CP001340">
    <property type="protein sequence ID" value="ACL94906.1"/>
    <property type="molecule type" value="Genomic_DNA"/>
</dbReference>
<dbReference type="RefSeq" id="WP_004624294.1">
    <property type="nucleotide sequence ID" value="NC_011916.1"/>
</dbReference>
<dbReference type="RefSeq" id="YP_002516814.1">
    <property type="nucleotide sequence ID" value="NC_011916.1"/>
</dbReference>
<dbReference type="SMR" id="B8H554"/>
<dbReference type="GeneID" id="7330171"/>
<dbReference type="KEGG" id="ccs:CCNA_01441"/>
<dbReference type="PATRIC" id="fig|565050.3.peg.1425"/>
<dbReference type="HOGENOM" id="CLU_046483_2_0_5"/>
<dbReference type="OrthoDB" id="9803965at2"/>
<dbReference type="PhylomeDB" id="B8H554"/>
<dbReference type="Proteomes" id="UP000001364">
    <property type="component" value="Chromosome"/>
</dbReference>
<dbReference type="GO" id="GO:0022627">
    <property type="term" value="C:cytosolic small ribosomal subunit"/>
    <property type="evidence" value="ECO:0007669"/>
    <property type="project" value="TreeGrafter"/>
</dbReference>
<dbReference type="GO" id="GO:0003723">
    <property type="term" value="F:RNA binding"/>
    <property type="evidence" value="ECO:0007669"/>
    <property type="project" value="TreeGrafter"/>
</dbReference>
<dbReference type="GO" id="GO:0003735">
    <property type="term" value="F:structural constituent of ribosome"/>
    <property type="evidence" value="ECO:0007669"/>
    <property type="project" value="InterPro"/>
</dbReference>
<dbReference type="GO" id="GO:0006412">
    <property type="term" value="P:translation"/>
    <property type="evidence" value="ECO:0007669"/>
    <property type="project" value="UniProtKB-UniRule"/>
</dbReference>
<dbReference type="FunFam" id="3.30.230.10:FF:000001">
    <property type="entry name" value="30S ribosomal protein S9"/>
    <property type="match status" value="1"/>
</dbReference>
<dbReference type="Gene3D" id="3.30.230.10">
    <property type="match status" value="1"/>
</dbReference>
<dbReference type="HAMAP" id="MF_00532_B">
    <property type="entry name" value="Ribosomal_uS9_B"/>
    <property type="match status" value="1"/>
</dbReference>
<dbReference type="InterPro" id="IPR020568">
    <property type="entry name" value="Ribosomal_Su5_D2-typ_SF"/>
</dbReference>
<dbReference type="InterPro" id="IPR000754">
    <property type="entry name" value="Ribosomal_uS9"/>
</dbReference>
<dbReference type="InterPro" id="IPR023035">
    <property type="entry name" value="Ribosomal_uS9_bac/plastid"/>
</dbReference>
<dbReference type="InterPro" id="IPR014721">
    <property type="entry name" value="Ribsml_uS5_D2-typ_fold_subgr"/>
</dbReference>
<dbReference type="NCBIfam" id="NF001099">
    <property type="entry name" value="PRK00132.1"/>
    <property type="match status" value="1"/>
</dbReference>
<dbReference type="PANTHER" id="PTHR21569">
    <property type="entry name" value="RIBOSOMAL PROTEIN S9"/>
    <property type="match status" value="1"/>
</dbReference>
<dbReference type="PANTHER" id="PTHR21569:SF1">
    <property type="entry name" value="SMALL RIBOSOMAL SUBUNIT PROTEIN US9M"/>
    <property type="match status" value="1"/>
</dbReference>
<dbReference type="Pfam" id="PF00380">
    <property type="entry name" value="Ribosomal_S9"/>
    <property type="match status" value="1"/>
</dbReference>
<dbReference type="SUPFAM" id="SSF54211">
    <property type="entry name" value="Ribosomal protein S5 domain 2-like"/>
    <property type="match status" value="1"/>
</dbReference>
<organism>
    <name type="scientific">Caulobacter vibrioides (strain NA1000 / CB15N)</name>
    <name type="common">Caulobacter crescentus</name>
    <dbReference type="NCBI Taxonomy" id="565050"/>
    <lineage>
        <taxon>Bacteria</taxon>
        <taxon>Pseudomonadati</taxon>
        <taxon>Pseudomonadota</taxon>
        <taxon>Alphaproteobacteria</taxon>
        <taxon>Caulobacterales</taxon>
        <taxon>Caulobacteraceae</taxon>
        <taxon>Caulobacter</taxon>
    </lineage>
</organism>